<feature type="chain" id="PRO_0000146973" description="Glutamate decarboxylase 1">
    <location>
        <begin position="1"/>
        <end position="502"/>
    </location>
</feature>
<feature type="region of interest" description="Calmodulin-binding">
    <location>
        <begin position="469"/>
        <end position="502"/>
    </location>
</feature>
<feature type="site" description="Anchoring site for calmodulin binding; modulates the equilibrium between pyridoxal phosphate tautomers">
    <location>
        <position position="496"/>
    </location>
</feature>
<feature type="site" description="Anchoring site for calmodulin binding; modulates the equilibrium between pyridoxal phosphate tautomers">
    <location>
        <position position="497"/>
    </location>
</feature>
<feature type="modified residue" description="Phosphoserine" evidence="1">
    <location>
        <position position="8"/>
    </location>
</feature>
<feature type="modified residue" description="N6-(pyridoxal phosphate)lysine">
    <location>
        <position position="277"/>
    </location>
</feature>
<feature type="mutagenesis site" description="No effect." evidence="4">
    <original>KK</original>
    <variation>AA</variation>
    <location>
        <begin position="474"/>
        <end position="475"/>
    </location>
</feature>
<feature type="mutagenesis site" description="No effect." evidence="4">
    <original>KK</original>
    <variation>AA</variation>
    <location>
        <begin position="489"/>
        <end position="490"/>
    </location>
</feature>
<feature type="mutagenesis site" description="Decreased activity. When associated with A-497; threefold decreased activity, but still pH-dependent." evidence="4">
    <original>K</original>
    <variation>A</variation>
    <location>
        <position position="496"/>
    </location>
</feature>
<feature type="mutagenesis site" description="Decreased activity. When associated with A-496; threefold decreased activity, but still pH-dependent." evidence="4">
    <original>K</original>
    <variation>A</variation>
    <location>
        <position position="497"/>
    </location>
</feature>
<feature type="mutagenesis site" description="No effect." evidence="4">
    <original>C</original>
    <variation>A</variation>
    <location>
        <position position="502"/>
    </location>
</feature>
<feature type="sequence conflict" description="In Ref. 1; AAA93132." evidence="10" ref="1">
    <original>A</original>
    <variation>D</variation>
    <location>
        <position position="208"/>
    </location>
</feature>
<feature type="turn" evidence="12">
    <location>
        <begin position="17"/>
        <end position="19"/>
    </location>
</feature>
<feature type="helix" evidence="12">
    <location>
        <begin position="22"/>
        <end position="24"/>
    </location>
</feature>
<feature type="strand" evidence="12">
    <location>
        <begin position="29"/>
        <end position="31"/>
    </location>
</feature>
<feature type="helix" evidence="12">
    <location>
        <begin position="39"/>
        <end position="49"/>
    </location>
</feature>
<feature type="helix" evidence="12">
    <location>
        <begin position="50"/>
        <end position="52"/>
    </location>
</feature>
<feature type="helix" evidence="12">
    <location>
        <begin position="56"/>
        <end position="58"/>
    </location>
</feature>
<feature type="helix" evidence="12">
    <location>
        <begin position="70"/>
        <end position="78"/>
    </location>
</feature>
<feature type="turn" evidence="12">
    <location>
        <begin position="79"/>
        <end position="81"/>
    </location>
</feature>
<feature type="turn" evidence="12">
    <location>
        <begin position="87"/>
        <end position="89"/>
    </location>
</feature>
<feature type="helix" evidence="12">
    <location>
        <begin position="91"/>
        <end position="107"/>
    </location>
</feature>
<feature type="strand" evidence="12">
    <location>
        <begin position="119"/>
        <end position="125"/>
    </location>
</feature>
<feature type="helix" evidence="12">
    <location>
        <begin position="126"/>
        <end position="147"/>
    </location>
</feature>
<feature type="strand" evidence="12">
    <location>
        <begin position="156"/>
        <end position="160"/>
    </location>
</feature>
<feature type="helix" evidence="12">
    <location>
        <begin position="165"/>
        <end position="173"/>
    </location>
</feature>
<feature type="strand" evidence="12">
    <location>
        <begin position="177"/>
        <end position="181"/>
    </location>
</feature>
<feature type="helix" evidence="12">
    <location>
        <begin position="192"/>
        <end position="198"/>
    </location>
</feature>
<feature type="strand" evidence="12">
    <location>
        <begin position="203"/>
        <end position="211"/>
    </location>
</feature>
<feature type="turn" evidence="12">
    <location>
        <begin position="213"/>
        <end position="215"/>
    </location>
</feature>
<feature type="helix" evidence="12">
    <location>
        <begin position="221"/>
        <end position="235"/>
    </location>
</feature>
<feature type="strand" evidence="12">
    <location>
        <begin position="241"/>
        <end position="244"/>
    </location>
</feature>
<feature type="helix" evidence="12">
    <location>
        <begin position="248"/>
        <end position="250"/>
    </location>
</feature>
<feature type="helix" evidence="12">
    <location>
        <begin position="252"/>
        <end position="255"/>
    </location>
</feature>
<feature type="strand" evidence="12">
    <location>
        <begin position="268"/>
        <end position="274"/>
    </location>
</feature>
<feature type="strand" evidence="12">
    <location>
        <begin position="286"/>
        <end position="292"/>
    </location>
</feature>
<feature type="helix" evidence="12">
    <location>
        <begin position="293"/>
        <end position="295"/>
    </location>
</feature>
<feature type="helix" evidence="12">
    <location>
        <begin position="298"/>
        <end position="300"/>
    </location>
</feature>
<feature type="strand" evidence="12">
    <location>
        <begin position="302"/>
        <end position="304"/>
    </location>
</feature>
<feature type="strand" evidence="12">
    <location>
        <begin position="306"/>
        <end position="309"/>
    </location>
</feature>
<feature type="strand" evidence="12">
    <location>
        <begin position="311"/>
        <end position="313"/>
    </location>
</feature>
<feature type="helix" evidence="12">
    <location>
        <begin position="323"/>
        <end position="359"/>
    </location>
</feature>
<feature type="turn" evidence="12">
    <location>
        <begin position="360"/>
        <end position="362"/>
    </location>
</feature>
<feature type="strand" evidence="12">
    <location>
        <begin position="364"/>
        <end position="366"/>
    </location>
</feature>
<feature type="strand" evidence="12">
    <location>
        <begin position="370"/>
        <end position="382"/>
    </location>
</feature>
<feature type="helix" evidence="12">
    <location>
        <begin position="388"/>
        <end position="396"/>
    </location>
</feature>
<feature type="turn" evidence="12">
    <location>
        <begin position="397"/>
        <end position="399"/>
    </location>
</feature>
<feature type="strand" evidence="12">
    <location>
        <begin position="404"/>
        <end position="406"/>
    </location>
</feature>
<feature type="strand" evidence="12">
    <location>
        <begin position="415"/>
        <end position="420"/>
    </location>
</feature>
<feature type="helix" evidence="12">
    <location>
        <begin position="427"/>
        <end position="445"/>
    </location>
</feature>
<dbReference type="EC" id="4.1.1.15" evidence="11"/>
<dbReference type="EMBL" id="U10034">
    <property type="protein sequence ID" value="AAA93132.1"/>
    <property type="molecule type" value="mRNA"/>
</dbReference>
<dbReference type="EMBL" id="AB005238">
    <property type="protein sequence ID" value="BAB10520.1"/>
    <property type="molecule type" value="Genomic_DNA"/>
</dbReference>
<dbReference type="EMBL" id="CP002688">
    <property type="protein sequence ID" value="AED92414.1"/>
    <property type="molecule type" value="Genomic_DNA"/>
</dbReference>
<dbReference type="EMBL" id="AY094464">
    <property type="protein sequence ID" value="AAM19834.1"/>
    <property type="molecule type" value="mRNA"/>
</dbReference>
<dbReference type="EMBL" id="BT001047">
    <property type="protein sequence ID" value="AAN46801.1"/>
    <property type="molecule type" value="mRNA"/>
</dbReference>
<dbReference type="RefSeq" id="NP_197235.1">
    <property type="nucleotide sequence ID" value="NM_121739.4"/>
</dbReference>
<dbReference type="PDB" id="3HBX">
    <property type="method" value="X-ray"/>
    <property type="resolution" value="2.67 A"/>
    <property type="chains" value="A/B/C/D/E/F=1-502"/>
</dbReference>
<dbReference type="PDBsum" id="3HBX"/>
<dbReference type="SMR" id="Q42521"/>
<dbReference type="BioGRID" id="16875">
    <property type="interactions" value="4"/>
</dbReference>
<dbReference type="FunCoup" id="Q42521">
    <property type="interactions" value="375"/>
</dbReference>
<dbReference type="STRING" id="3702.Q42521"/>
<dbReference type="iPTMnet" id="Q42521"/>
<dbReference type="MetOSite" id="Q42521"/>
<dbReference type="PaxDb" id="3702-AT5G17330.1"/>
<dbReference type="ProteomicsDB" id="222197"/>
<dbReference type="EnsemblPlants" id="AT5G17330.1">
    <property type="protein sequence ID" value="AT5G17330.1"/>
    <property type="gene ID" value="AT5G17330"/>
</dbReference>
<dbReference type="GeneID" id="831599"/>
<dbReference type="Gramene" id="AT5G17330.1">
    <property type="protein sequence ID" value="AT5G17330.1"/>
    <property type="gene ID" value="AT5G17330"/>
</dbReference>
<dbReference type="KEGG" id="ath:AT5G17330"/>
<dbReference type="Araport" id="AT5G17330"/>
<dbReference type="TAIR" id="AT5G17330">
    <property type="gene designation" value="GAD"/>
</dbReference>
<dbReference type="eggNOG" id="KOG1383">
    <property type="taxonomic scope" value="Eukaryota"/>
</dbReference>
<dbReference type="HOGENOM" id="CLU_019582_2_2_1"/>
<dbReference type="InParanoid" id="Q42521"/>
<dbReference type="OMA" id="PCTETRY"/>
<dbReference type="OrthoDB" id="1027753at2759"/>
<dbReference type="PhylomeDB" id="Q42521"/>
<dbReference type="BioCyc" id="ARA:AT5G17330-MONOMER"/>
<dbReference type="BRENDA" id="4.1.1.15">
    <property type="organism ID" value="399"/>
</dbReference>
<dbReference type="CD-CODE" id="4299E36E">
    <property type="entry name" value="Nucleolus"/>
</dbReference>
<dbReference type="EvolutionaryTrace" id="Q42521"/>
<dbReference type="PRO" id="PR:Q42521"/>
<dbReference type="Proteomes" id="UP000006548">
    <property type="component" value="Chromosome 5"/>
</dbReference>
<dbReference type="ExpressionAtlas" id="Q42521">
    <property type="expression patterns" value="baseline and differential"/>
</dbReference>
<dbReference type="GO" id="GO:0005516">
    <property type="term" value="F:calmodulin binding"/>
    <property type="evidence" value="ECO:0000314"/>
    <property type="project" value="TAIR"/>
</dbReference>
<dbReference type="GO" id="GO:0004351">
    <property type="term" value="F:glutamate decarboxylase activity"/>
    <property type="evidence" value="ECO:0000314"/>
    <property type="project" value="TAIR"/>
</dbReference>
<dbReference type="GO" id="GO:0060090">
    <property type="term" value="F:molecular adaptor activity"/>
    <property type="evidence" value="ECO:0000269"/>
    <property type="project" value="DisProt"/>
</dbReference>
<dbReference type="GO" id="GO:0030170">
    <property type="term" value="F:pyridoxal phosphate binding"/>
    <property type="evidence" value="ECO:0007669"/>
    <property type="project" value="InterPro"/>
</dbReference>
<dbReference type="GO" id="GO:0006536">
    <property type="term" value="P:glutamate metabolic process"/>
    <property type="evidence" value="ECO:0007669"/>
    <property type="project" value="InterPro"/>
</dbReference>
<dbReference type="CDD" id="cd06450">
    <property type="entry name" value="DOPA_deC_like"/>
    <property type="match status" value="1"/>
</dbReference>
<dbReference type="DisProt" id="DP02726"/>
<dbReference type="FunFam" id="3.40.640.10:FF:000022">
    <property type="entry name" value="Glutamate decarboxylase"/>
    <property type="match status" value="1"/>
</dbReference>
<dbReference type="FunFam" id="3.90.1150.160:FF:000001">
    <property type="entry name" value="Glutamate decarboxylase"/>
    <property type="match status" value="1"/>
</dbReference>
<dbReference type="FunFam" id="4.10.280.50:FF:000002">
    <property type="entry name" value="Glutamate decarboxylase"/>
    <property type="match status" value="1"/>
</dbReference>
<dbReference type="Gene3D" id="3.90.1150.160">
    <property type="match status" value="1"/>
</dbReference>
<dbReference type="Gene3D" id="4.10.280.50">
    <property type="match status" value="1"/>
</dbReference>
<dbReference type="Gene3D" id="3.40.640.10">
    <property type="entry name" value="Type I PLP-dependent aspartate aminotransferase-like (Major domain)"/>
    <property type="match status" value="1"/>
</dbReference>
<dbReference type="InterPro" id="IPR010107">
    <property type="entry name" value="Glutamate_decarboxylase"/>
</dbReference>
<dbReference type="InterPro" id="IPR002129">
    <property type="entry name" value="PyrdxlP-dep_de-COase"/>
</dbReference>
<dbReference type="InterPro" id="IPR015424">
    <property type="entry name" value="PyrdxlP-dep_Trfase"/>
</dbReference>
<dbReference type="InterPro" id="IPR015421">
    <property type="entry name" value="PyrdxlP-dep_Trfase_major"/>
</dbReference>
<dbReference type="NCBIfam" id="TIGR01788">
    <property type="entry name" value="Glu-decarb-GAD"/>
    <property type="match status" value="1"/>
</dbReference>
<dbReference type="PANTHER" id="PTHR43321">
    <property type="entry name" value="GLUTAMATE DECARBOXYLASE"/>
    <property type="match status" value="1"/>
</dbReference>
<dbReference type="PANTHER" id="PTHR43321:SF34">
    <property type="entry name" value="GLUTAMATE DECARBOXYLASE 1"/>
    <property type="match status" value="1"/>
</dbReference>
<dbReference type="Pfam" id="PF00282">
    <property type="entry name" value="Pyridoxal_deC"/>
    <property type="match status" value="1"/>
</dbReference>
<dbReference type="SUPFAM" id="SSF53383">
    <property type="entry name" value="PLP-dependent transferases"/>
    <property type="match status" value="1"/>
</dbReference>
<reference key="1">
    <citation type="journal article" date="1995" name="Plant Physiol.">
        <title>Molecular and biochemical analysis of calmodulin interactions with the calmodulin-binding domain of plant glutamate decarboxylase.</title>
        <authorList>
            <person name="Arazi T."/>
            <person name="Baum G."/>
            <person name="Snedden W.A."/>
            <person name="Shelp B.J."/>
            <person name="Fromm H."/>
        </authorList>
    </citation>
    <scope>NUCLEOTIDE SEQUENCE [MRNA]</scope>
    <scope>INTERACTION WITH CALMODULIN</scope>
    <source>
        <strain>cv. Columbia</strain>
    </source>
</reference>
<reference key="2">
    <citation type="journal article" date="1997" name="DNA Res.">
        <title>Structural analysis of Arabidopsis thaliana chromosome 5. I. Sequence features of the 1.6 Mb regions covered by twenty physically assigned P1 clones.</title>
        <authorList>
            <person name="Sato S."/>
            <person name="Kotani H."/>
            <person name="Nakamura Y."/>
            <person name="Kaneko T."/>
            <person name="Asamizu E."/>
            <person name="Fukami M."/>
            <person name="Miyajima N."/>
            <person name="Tabata S."/>
        </authorList>
    </citation>
    <scope>NUCLEOTIDE SEQUENCE [LARGE SCALE GENOMIC DNA]</scope>
    <source>
        <strain>cv. Columbia</strain>
    </source>
</reference>
<reference key="3">
    <citation type="journal article" date="2017" name="Plant J.">
        <title>Araport11: a complete reannotation of the Arabidopsis thaliana reference genome.</title>
        <authorList>
            <person name="Cheng C.Y."/>
            <person name="Krishnakumar V."/>
            <person name="Chan A.P."/>
            <person name="Thibaud-Nissen F."/>
            <person name="Schobel S."/>
            <person name="Town C.D."/>
        </authorList>
    </citation>
    <scope>GENOME REANNOTATION</scope>
    <source>
        <strain>cv. Columbia</strain>
    </source>
</reference>
<reference key="4">
    <citation type="journal article" date="2003" name="Science">
        <title>Empirical analysis of transcriptional activity in the Arabidopsis genome.</title>
        <authorList>
            <person name="Yamada K."/>
            <person name="Lim J."/>
            <person name="Dale J.M."/>
            <person name="Chen H."/>
            <person name="Shinn P."/>
            <person name="Palm C.J."/>
            <person name="Southwick A.M."/>
            <person name="Wu H.C."/>
            <person name="Kim C.J."/>
            <person name="Nguyen M."/>
            <person name="Pham P.K."/>
            <person name="Cheuk R.F."/>
            <person name="Karlin-Newmann G."/>
            <person name="Liu S.X."/>
            <person name="Lam B."/>
            <person name="Sakano H."/>
            <person name="Wu T."/>
            <person name="Yu G."/>
            <person name="Miranda M."/>
            <person name="Quach H.L."/>
            <person name="Tripp M."/>
            <person name="Chang C.H."/>
            <person name="Lee J.M."/>
            <person name="Toriumi M.J."/>
            <person name="Chan M.M."/>
            <person name="Tang C.C."/>
            <person name="Onodera C.S."/>
            <person name="Deng J.M."/>
            <person name="Akiyama K."/>
            <person name="Ansari Y."/>
            <person name="Arakawa T."/>
            <person name="Banh J."/>
            <person name="Banno F."/>
            <person name="Bowser L."/>
            <person name="Brooks S.Y."/>
            <person name="Carninci P."/>
            <person name="Chao Q."/>
            <person name="Choy N."/>
            <person name="Enju A."/>
            <person name="Goldsmith A.D."/>
            <person name="Gurjal M."/>
            <person name="Hansen N.F."/>
            <person name="Hayashizaki Y."/>
            <person name="Johnson-Hopson C."/>
            <person name="Hsuan V.W."/>
            <person name="Iida K."/>
            <person name="Karnes M."/>
            <person name="Khan S."/>
            <person name="Koesema E."/>
            <person name="Ishida J."/>
            <person name="Jiang P.X."/>
            <person name="Jones T."/>
            <person name="Kawai J."/>
            <person name="Kamiya A."/>
            <person name="Meyers C."/>
            <person name="Nakajima M."/>
            <person name="Narusaka M."/>
            <person name="Seki M."/>
            <person name="Sakurai T."/>
            <person name="Satou M."/>
            <person name="Tamse R."/>
            <person name="Vaysberg M."/>
            <person name="Wallender E.K."/>
            <person name="Wong C."/>
            <person name="Yamamura Y."/>
            <person name="Yuan S."/>
            <person name="Shinozaki K."/>
            <person name="Davis R.W."/>
            <person name="Theologis A."/>
            <person name="Ecker J.R."/>
        </authorList>
    </citation>
    <scope>NUCLEOTIDE SEQUENCE [LARGE SCALE MRNA]</scope>
    <source>
        <strain>cv. Columbia</strain>
    </source>
</reference>
<reference key="5">
    <citation type="journal article" date="1998" name="Plant Mol. Biol.">
        <title>Two isoforms of glutamate decarboxylase in Arabidopsis are regulated by calcium/calmodulin and differ in organ distribution.</title>
        <authorList>
            <person name="Zik M."/>
            <person name="Arazi T."/>
            <person name="Snedden W.A."/>
            <person name="Fromm H."/>
        </authorList>
    </citation>
    <scope>FUNCTION</scope>
    <scope>CATALYTIC ACTIVITY</scope>
    <scope>INTERACTION WITH CALMODULIN</scope>
    <scope>TISSUE SPECIFICITY</scope>
    <source>
        <strain>cv. Columbia</strain>
    </source>
</reference>
<reference key="6">
    <citation type="journal article" date="1998" name="Plant Physiol.">
        <title>Characterization of two glutamate decarboxylase cDNA clones from Arabidopsis.</title>
        <authorList>
            <person name="Turano F.J."/>
            <person name="Fang T.K."/>
        </authorList>
    </citation>
    <scope>TISSUE SPECIFICITY</scope>
</reference>
<reference key="7">
    <citation type="journal article" date="2004" name="Plant Mol. Biol.">
        <title>The root-specific glutamate decarboxylase (GAD1) is essential for sustaining GABA levels in Arabidopsis.</title>
        <authorList>
            <person name="Bouche N."/>
            <person name="Fait A."/>
            <person name="Zik M."/>
            <person name="Fromm H."/>
        </authorList>
    </citation>
    <scope>TISSUE SPECIFICITY</scope>
    <scope>DISRUPTION PHENOTYPE</scope>
    <source>
        <strain>cv. Columbia</strain>
    </source>
</reference>
<reference key="8">
    <citation type="journal article" date="2008" name="Plant Cell Physiol.">
        <title>Contribution of the GABA shunt to hypoxia-induced alanine accumulation in roots of Arabidopsis thaliana.</title>
        <authorList>
            <person name="Miyashita Y."/>
            <person name="Good A.G."/>
        </authorList>
    </citation>
    <scope>TISSUE SPECIFICITY</scope>
    <scope>INDUCTION BY HYPOXIA</scope>
    <scope>DISRUPTION PHENOTYPE</scope>
</reference>
<reference key="9">
    <citation type="journal article" date="2010" name="BMC Plant Biol.">
        <title>The Arabidopsis pop2-1 mutant reveals the involvement of GABA transaminase in salt stress tolerance.</title>
        <authorList>
            <person name="Renault H."/>
            <person name="Roussel V."/>
            <person name="El Amrani A."/>
            <person name="Arzel M."/>
            <person name="Renault D."/>
            <person name="Bouchereau A."/>
            <person name="Deleu C."/>
        </authorList>
    </citation>
    <scope>INDUCTION BY SALT</scope>
</reference>
<reference key="10">
    <citation type="journal article" date="2009" name="J. Mol. Biol.">
        <title>A common structural basis for pH- and calmodulin-mediated regulation in plant glutamate decarboxylase.</title>
        <authorList>
            <person name="Gut H."/>
            <person name="Dominici P."/>
            <person name="Pilati S."/>
            <person name="Astegno A."/>
            <person name="Petoukhov M.V."/>
            <person name="Svergun D.I."/>
            <person name="Gruetter M.G."/>
            <person name="Capitani G."/>
        </authorList>
    </citation>
    <scope>X-RAY CRYSTALLOGRAPHY (2.67 ANGSTROMS)</scope>
    <scope>SUBUNIT</scope>
    <scope>BIOPHYSICOCHEMICAL PROPERTIES</scope>
    <scope>ACTIVITY REGULATION</scope>
    <scope>MUTAGENESIS OF 474-LYS-LYS-475; 489-LYS-LYS-490; LYS-496; LYS-497 AND CYS-502</scope>
</reference>
<comment type="function">
    <text evidence="7">Catalyzes the conversion of glutamate to 4-aminobutanoate (GABA). The calmodulin-binding is calcium-dependent and it is proposed to directly or indirectly form a calcium regulated control of GABA biosynthesis.</text>
</comment>
<comment type="catalytic activity">
    <reaction evidence="11">
        <text>L-glutamate + H(+) = 4-aminobutanoate + CO2</text>
        <dbReference type="Rhea" id="RHEA:17785"/>
        <dbReference type="ChEBI" id="CHEBI:15378"/>
        <dbReference type="ChEBI" id="CHEBI:16526"/>
        <dbReference type="ChEBI" id="CHEBI:29985"/>
        <dbReference type="ChEBI" id="CHEBI:59888"/>
        <dbReference type="EC" id="4.1.1.15"/>
    </reaction>
    <physiologicalReaction direction="left-to-right" evidence="11">
        <dbReference type="Rhea" id="RHEA:17786"/>
    </physiologicalReaction>
</comment>
<comment type="cofactor">
    <cofactor>
        <name>pyridoxal 5'-phosphate</name>
        <dbReference type="ChEBI" id="CHEBI:597326"/>
    </cofactor>
</comment>
<comment type="activity regulation">
    <text evidence="4">Up-regulated by calmodulin binding at physiological pH.</text>
</comment>
<comment type="biophysicochemical properties">
    <phDependence>
        <text evidence="4">Optimum pH is 6.0.</text>
    </phDependence>
</comment>
<comment type="subunit">
    <text evidence="4 6 7">Homohexamer. Interacts with calmodulin with a 1:3 stoichiometry.</text>
</comment>
<comment type="tissue specificity">
    <text evidence="2 3 7 8">Expressed in roots. Detected at low levels in shoots of young seedlings. Not detected in the root tips or in the central vascular bundle in the elongating region of mature roots.</text>
</comment>
<comment type="induction">
    <text evidence="3 5">Down-regulated by salt treatment. Not induced by hypoxia.</text>
</comment>
<comment type="domain">
    <text>The N-terminus (1-57) is involved in the formation of the multimer. The C-terminus (471-502) binds calmodulin in a calcium-dependent fashion and contains probably an autoinhibitory domain.</text>
</comment>
<comment type="disruption phenotype">
    <text evidence="2 3">No visible phenotype, but increased glutamate levels and decreased GABA levels in the roots, and loss of GABA accumulation upon heat stress.</text>
</comment>
<comment type="similarity">
    <text evidence="10">Belongs to the group II decarboxylase family.</text>
</comment>
<name>DCE1_ARATH</name>
<accession>Q42521</accession>
<accession>Q9FFH9</accession>
<evidence type="ECO:0000250" key="1">
    <source>
        <dbReference type="UniProtKB" id="Q9ZPS3"/>
    </source>
</evidence>
<evidence type="ECO:0000269" key="2">
    <source>
    </source>
</evidence>
<evidence type="ECO:0000269" key="3">
    <source>
    </source>
</evidence>
<evidence type="ECO:0000269" key="4">
    <source>
    </source>
</evidence>
<evidence type="ECO:0000269" key="5">
    <source>
    </source>
</evidence>
<evidence type="ECO:0000269" key="6">
    <source>
    </source>
</evidence>
<evidence type="ECO:0000269" key="7">
    <source>
    </source>
</evidence>
<evidence type="ECO:0000269" key="8">
    <source>
    </source>
</evidence>
<evidence type="ECO:0000303" key="9">
    <source>
    </source>
</evidence>
<evidence type="ECO:0000305" key="10"/>
<evidence type="ECO:0000305" key="11">
    <source>
    </source>
</evidence>
<evidence type="ECO:0007829" key="12">
    <source>
        <dbReference type="PDB" id="3HBX"/>
    </source>
</evidence>
<proteinExistence type="evidence at protein level"/>
<keyword id="KW-0002">3D-structure</keyword>
<keyword id="KW-0112">Calmodulin-binding</keyword>
<keyword id="KW-0210">Decarboxylase</keyword>
<keyword id="KW-0456">Lyase</keyword>
<keyword id="KW-0597">Phosphoprotein</keyword>
<keyword id="KW-0663">Pyridoxal phosphate</keyword>
<keyword id="KW-1185">Reference proteome</keyword>
<protein>
    <recommendedName>
        <fullName>Glutamate decarboxylase 1</fullName>
        <shortName evidence="9">GAD 1</shortName>
        <ecNumber evidence="11">4.1.1.15</ecNumber>
    </recommendedName>
</protein>
<gene>
    <name type="primary">GAD1</name>
    <name type="synonym">GAD</name>
    <name type="synonym">GDH1</name>
    <name type="ordered locus">At5g17330</name>
    <name type="ORF">MKP11.30</name>
    <name type="ORF">MKP11_18</name>
</gene>
<sequence length="502" mass="57066">MVLSHAVSESDVSVHSTFASRYVRTSLPRFKMPENSIPKEAAYQIINDELMLDGNPRLNLASFVTTWMEPECDKLIMSSINKNYVDMDEYPVTTELQNRCVNMIAHLFNAPLEEAETAVGVGTVGSSEAIMLAGLAFKRKWQNKRKAEGKPVDKPNIVTGANVQVCWEKFARYFEVELKEVKLSEGYYVMDPQQAVDMVDENTICVAAILGSTLNGEFEDVKLLNDLLVEKNKETGWDTPIHVDAASGGFIAPFLYPELEWDFRLPLVKSINVSGHKYGLVYAGIGWVIWRNKEDLPEELIFHINYLGADQPTFTLNFSKGSSQVIAQYYQLIRLGHEGYRNVMENCRENMIVLREGLEKTERFNIVSKDEGVPLVAFSLKDSSCHTEFEISDMLRRYGWIVPAYTMPPNAQHITVLRVVIREDFSRTLAERLVIDIEKVMRELDELPSRVIHKISLGQEKSESNSDNLMVTVKKSDIDKQRDIITGWKKFVADRKKTSGIC</sequence>
<organism>
    <name type="scientific">Arabidopsis thaliana</name>
    <name type="common">Mouse-ear cress</name>
    <dbReference type="NCBI Taxonomy" id="3702"/>
    <lineage>
        <taxon>Eukaryota</taxon>
        <taxon>Viridiplantae</taxon>
        <taxon>Streptophyta</taxon>
        <taxon>Embryophyta</taxon>
        <taxon>Tracheophyta</taxon>
        <taxon>Spermatophyta</taxon>
        <taxon>Magnoliopsida</taxon>
        <taxon>eudicotyledons</taxon>
        <taxon>Gunneridae</taxon>
        <taxon>Pentapetalae</taxon>
        <taxon>rosids</taxon>
        <taxon>malvids</taxon>
        <taxon>Brassicales</taxon>
        <taxon>Brassicaceae</taxon>
        <taxon>Camelineae</taxon>
        <taxon>Arabidopsis</taxon>
    </lineage>
</organism>